<accession>B0REJ6</accession>
<keyword id="KW-0067">ATP-binding</keyword>
<keyword id="KW-0342">GTP-binding</keyword>
<keyword id="KW-0547">Nucleotide-binding</keyword>
<dbReference type="EMBL" id="AM849034">
    <property type="protein sequence ID" value="CAQ02088.1"/>
    <property type="molecule type" value="Genomic_DNA"/>
</dbReference>
<dbReference type="SMR" id="B0REJ6"/>
<dbReference type="STRING" id="31964.CMS1991"/>
<dbReference type="KEGG" id="cms:CMS1991"/>
<dbReference type="eggNOG" id="COG1660">
    <property type="taxonomic scope" value="Bacteria"/>
</dbReference>
<dbReference type="HOGENOM" id="CLU_059558_0_0_11"/>
<dbReference type="Proteomes" id="UP000001318">
    <property type="component" value="Chromosome"/>
</dbReference>
<dbReference type="GO" id="GO:0005524">
    <property type="term" value="F:ATP binding"/>
    <property type="evidence" value="ECO:0007669"/>
    <property type="project" value="UniProtKB-UniRule"/>
</dbReference>
<dbReference type="GO" id="GO:0005525">
    <property type="term" value="F:GTP binding"/>
    <property type="evidence" value="ECO:0007669"/>
    <property type="project" value="UniProtKB-UniRule"/>
</dbReference>
<dbReference type="Gene3D" id="3.40.50.300">
    <property type="entry name" value="P-loop containing nucleotide triphosphate hydrolases"/>
    <property type="match status" value="1"/>
</dbReference>
<dbReference type="HAMAP" id="MF_00636">
    <property type="entry name" value="RapZ_like"/>
    <property type="match status" value="1"/>
</dbReference>
<dbReference type="InterPro" id="IPR027417">
    <property type="entry name" value="P-loop_NTPase"/>
</dbReference>
<dbReference type="InterPro" id="IPR005337">
    <property type="entry name" value="RapZ-like"/>
</dbReference>
<dbReference type="InterPro" id="IPR053930">
    <property type="entry name" value="RapZ-like_N"/>
</dbReference>
<dbReference type="InterPro" id="IPR053931">
    <property type="entry name" value="RapZ_C"/>
</dbReference>
<dbReference type="NCBIfam" id="NF003828">
    <property type="entry name" value="PRK05416.1"/>
    <property type="match status" value="1"/>
</dbReference>
<dbReference type="PANTHER" id="PTHR30448">
    <property type="entry name" value="RNASE ADAPTER PROTEIN RAPZ"/>
    <property type="match status" value="1"/>
</dbReference>
<dbReference type="PANTHER" id="PTHR30448:SF0">
    <property type="entry name" value="RNASE ADAPTER PROTEIN RAPZ"/>
    <property type="match status" value="1"/>
</dbReference>
<dbReference type="Pfam" id="PF22740">
    <property type="entry name" value="PapZ_C"/>
    <property type="match status" value="1"/>
</dbReference>
<dbReference type="Pfam" id="PF03668">
    <property type="entry name" value="RapZ-like_N"/>
    <property type="match status" value="1"/>
</dbReference>
<dbReference type="PIRSF" id="PIRSF005052">
    <property type="entry name" value="P-loopkin"/>
    <property type="match status" value="1"/>
</dbReference>
<dbReference type="SUPFAM" id="SSF52540">
    <property type="entry name" value="P-loop containing nucleoside triphosphate hydrolases"/>
    <property type="match status" value="1"/>
</dbReference>
<gene>
    <name type="ordered locus">CMS1991</name>
</gene>
<comment type="function">
    <text evidence="1">Displays ATPase and GTPase activities.</text>
</comment>
<comment type="similarity">
    <text evidence="1">Belongs to the RapZ-like family.</text>
</comment>
<reference key="1">
    <citation type="journal article" date="2008" name="J. Bacteriol.">
        <title>Genome of the actinomycete plant pathogen Clavibacter michiganensis subsp. sepedonicus suggests recent niche adaptation.</title>
        <authorList>
            <person name="Bentley S.D."/>
            <person name="Corton C."/>
            <person name="Brown S.E."/>
            <person name="Barron A."/>
            <person name="Clark L."/>
            <person name="Doggett J."/>
            <person name="Harris B."/>
            <person name="Ormond D."/>
            <person name="Quail M.A."/>
            <person name="May G."/>
            <person name="Francis D."/>
            <person name="Knudson D."/>
            <person name="Parkhill J."/>
            <person name="Ishimaru C.A."/>
        </authorList>
    </citation>
    <scope>NUCLEOTIDE SEQUENCE [LARGE SCALE GENOMIC DNA]</scope>
    <source>
        <strain>ATCC 33113 / DSM 20744 / JCM 9667 / LMG 2889 / ICMP 2535 / C-1</strain>
    </source>
</reference>
<evidence type="ECO:0000255" key="1">
    <source>
        <dbReference type="HAMAP-Rule" id="MF_00636"/>
    </source>
</evidence>
<sequence>MHARMSVEIPQQDVMIVTGMSGAGRSTVGNALEDLGWYVVDNLPPQMLKPLVELAGRAGTSLPKIAAVVDVRGGDFFSELRDILHTFGTGPRLRVLFLEATDAALVRRFEQVRRPHPLQGNGTLLDGIAAERARMIEIREASDLVIDTSELNIHQLATTITEQFSGADDAGVRVTVMSFGFKYGTPADADMVADMRFLPNPFWTPELRPLTGRDKAVSDYVLGQEGAEEFVHAYARALAPVLAGYQRENKRHATIAIGCTGGKHRSVAVSEELSSLLRALPGVAVSTKHRDLGRE</sequence>
<protein>
    <recommendedName>
        <fullName evidence="1">Nucleotide-binding protein CMS1991</fullName>
    </recommendedName>
</protein>
<organism>
    <name type="scientific">Clavibacter sepedonicus</name>
    <name type="common">Clavibacter michiganensis subsp. sepedonicus</name>
    <dbReference type="NCBI Taxonomy" id="31964"/>
    <lineage>
        <taxon>Bacteria</taxon>
        <taxon>Bacillati</taxon>
        <taxon>Actinomycetota</taxon>
        <taxon>Actinomycetes</taxon>
        <taxon>Micrococcales</taxon>
        <taxon>Microbacteriaceae</taxon>
        <taxon>Clavibacter</taxon>
    </lineage>
</organism>
<proteinExistence type="inferred from homology"/>
<name>Y1991_CLASE</name>
<feature type="chain" id="PRO_1000082655" description="Nucleotide-binding protein CMS1991">
    <location>
        <begin position="1"/>
        <end position="295"/>
    </location>
</feature>
<feature type="binding site" evidence="1">
    <location>
        <begin position="19"/>
        <end position="26"/>
    </location>
    <ligand>
        <name>ATP</name>
        <dbReference type="ChEBI" id="CHEBI:30616"/>
    </ligand>
</feature>
<feature type="binding site" evidence="1">
    <location>
        <begin position="70"/>
        <end position="73"/>
    </location>
    <ligand>
        <name>GTP</name>
        <dbReference type="ChEBI" id="CHEBI:37565"/>
    </ligand>
</feature>